<feature type="chain" id="PRO_0000414496" description="Folylpolyglutamate synthase">
    <location>
        <begin position="1"/>
        <end position="548"/>
    </location>
</feature>
<feature type="binding site" evidence="1">
    <location>
        <begin position="130"/>
        <end position="133"/>
    </location>
    <ligand>
        <name>ATP</name>
        <dbReference type="ChEBI" id="CHEBI:30616"/>
    </ligand>
</feature>
<feature type="binding site" evidence="1">
    <location>
        <position position="157"/>
    </location>
    <ligand>
        <name>Mg(2+)</name>
        <dbReference type="ChEBI" id="CHEBI:18420"/>
        <label>1</label>
    </ligand>
</feature>
<feature type="binding site" evidence="1">
    <location>
        <position position="234"/>
    </location>
    <ligand>
        <name>Mg(2+)</name>
        <dbReference type="ChEBI" id="CHEBI:18420"/>
        <label>1</label>
    </ligand>
</feature>
<feature type="binding site" evidence="1">
    <location>
        <position position="262"/>
    </location>
    <ligand>
        <name>Mg(2+)</name>
        <dbReference type="ChEBI" id="CHEBI:18420"/>
        <label>2</label>
    </ligand>
</feature>
<feature type="binding site" evidence="1">
    <location>
        <position position="382"/>
    </location>
    <ligand>
        <name>ATP</name>
        <dbReference type="ChEBI" id="CHEBI:30616"/>
    </ligand>
</feature>
<feature type="binding site" evidence="1">
    <location>
        <position position="396"/>
    </location>
    <ligand>
        <name>ATP</name>
        <dbReference type="ChEBI" id="CHEBI:30616"/>
    </ligand>
</feature>
<proteinExistence type="inferred from homology"/>
<evidence type="ECO:0000250" key="1">
    <source>
        <dbReference type="UniProtKB" id="P08192"/>
    </source>
</evidence>
<evidence type="ECO:0000250" key="2">
    <source>
        <dbReference type="UniProtKB" id="Q08645"/>
    </source>
</evidence>
<evidence type="ECO:0000305" key="3"/>
<evidence type="ECO:0000312" key="4">
    <source>
        <dbReference type="EMBL" id="EGA84698.1"/>
    </source>
</evidence>
<comment type="function">
    <text evidence="2">Catalyzes conversion of folates to polyglutamate derivatives allowing concentration of folate compounds in the cell and the intracellular retention of these cofactors, which are important substrates for most of the folate-dependent enzymes that are involved in one-carbon transfer reactions involved in purine, pyrimidine and amino acid synthesis. Required for methionine synthesis and maintenance of intact mitochondrial DNA. Involved in telomere maintenance (By similarity).</text>
</comment>
<comment type="catalytic activity">
    <reaction evidence="2">
        <text>(6S)-5,6,7,8-tetrahydrofolyl-(gamma-L-Glu)(n) + L-glutamate + ATP = (6S)-5,6,7,8-tetrahydrofolyl-(gamma-L-Glu)(n+1) + ADP + phosphate + H(+)</text>
        <dbReference type="Rhea" id="RHEA:10580"/>
        <dbReference type="Rhea" id="RHEA-COMP:14738"/>
        <dbReference type="Rhea" id="RHEA-COMP:14740"/>
        <dbReference type="ChEBI" id="CHEBI:15378"/>
        <dbReference type="ChEBI" id="CHEBI:29985"/>
        <dbReference type="ChEBI" id="CHEBI:30616"/>
        <dbReference type="ChEBI" id="CHEBI:43474"/>
        <dbReference type="ChEBI" id="CHEBI:141005"/>
        <dbReference type="ChEBI" id="CHEBI:456216"/>
        <dbReference type="EC" id="6.3.2.17"/>
    </reaction>
</comment>
<comment type="cofactor">
    <cofactor evidence="2">
        <name>a monovalent cation</name>
        <dbReference type="ChEBI" id="CHEBI:60242"/>
    </cofactor>
    <text evidence="2">A monovalent cation.</text>
</comment>
<comment type="pathway">
    <text evidence="2">Cofactor biosynthesis; tetrahydrofolylpolyglutamate biosynthesis.</text>
</comment>
<comment type="subcellular location">
    <subcellularLocation>
        <location evidence="2">Mitochondrion inner membrane</location>
    </subcellularLocation>
    <subcellularLocation>
        <location evidence="2">Mitochondrion matrix</location>
    </subcellularLocation>
    <subcellularLocation>
        <location evidence="2">Cytoplasm</location>
    </subcellularLocation>
</comment>
<comment type="similarity">
    <text evidence="2">Belongs to the folylpolyglutamate synthase family.</text>
</comment>
<comment type="sequence caution" evidence="3">
    <conflict type="erroneous initiation">
        <sequence resource="EMBL-CDS" id="EGA84698"/>
    </conflict>
    <text>Truncated N-terminus.</text>
</comment>
<organism>
    <name type="scientific">Saccharomyces cerevisiae (strain Zymaflore VL3)</name>
    <name type="common">Baker's yeast</name>
    <dbReference type="NCBI Taxonomy" id="764100"/>
    <lineage>
        <taxon>Eukaryota</taxon>
        <taxon>Fungi</taxon>
        <taxon>Dikarya</taxon>
        <taxon>Ascomycota</taxon>
        <taxon>Saccharomycotina</taxon>
        <taxon>Saccharomycetes</taxon>
        <taxon>Saccharomycetales</taxon>
        <taxon>Saccharomycetaceae</taxon>
        <taxon>Saccharomyces</taxon>
    </lineage>
</organism>
<name>FOLE_YEASZ</name>
<keyword id="KW-0067">ATP-binding</keyword>
<keyword id="KW-0963">Cytoplasm</keyword>
<keyword id="KW-0436">Ligase</keyword>
<keyword id="KW-0460">Magnesium</keyword>
<keyword id="KW-0472">Membrane</keyword>
<keyword id="KW-0479">Metal-binding</keyword>
<keyword id="KW-0496">Mitochondrion</keyword>
<keyword id="KW-0999">Mitochondrion inner membrane</keyword>
<keyword id="KW-0547">Nucleotide-binding</keyword>
<keyword id="KW-0554">One-carbon metabolism</keyword>
<sequence length="548" mass="62151">MHKGKKNYPNLITSFRMNLKKIILNHDRFSHPERWKTNALLRFTFVYIKFLFDLMIIKNPLRMVGKTYRDAVTALNSLQSNYANIMAIRQTGDRKNTMTLLEMHEWSRRIGYSASDFNKLNIVHITGTKGKGSTAAFTSSILGQYKEQLPRIGLYTSPHLKSVRERIRINGEPISEEKFAKYFFEVWDRLDSTTSSLDKFPHMIPGSKPGYFKFLTLLSFHTFIQEDCKSCVYEVGVGGELDSTNIIEKPIVCGVTLLGIDHTFMLGDTIEEIAWNKGGIFKSGAPAFTVEKQPPQGLTILKERAEERKTTLTEVPPFKQLENVKLGIAGEFQKSNASLAVMLASEILHTSNILEEKIKCSSNASIPEKFIIGLQNTKWEGRCQVLEKGKNVWYIDGAHTKDSMVAASTWFRDMVRLSKRKKILLFNQQSRDANALVNNLYSSVSPEITFDDVIFTTNVTWKSGSYSADLVSMNTSQEDVEKLKVQESLVKNWNKIDDNRAKTHVTASIEEANELIETLYDEPADIFVTGSLHLVGGLLVVFDRIDVK</sequence>
<dbReference type="EC" id="6.3.2.17" evidence="2"/>
<dbReference type="EMBL" id="AEJS01000062">
    <property type="protein sequence ID" value="EGA84698.1"/>
    <property type="status" value="ALT_INIT"/>
    <property type="molecule type" value="Genomic_DNA"/>
</dbReference>
<dbReference type="SMR" id="E7QKX4"/>
<dbReference type="HOGENOM" id="CLU_015869_0_1_1"/>
<dbReference type="OrthoDB" id="5212574at2759"/>
<dbReference type="UniPathway" id="UPA00850"/>
<dbReference type="GO" id="GO:0005829">
    <property type="term" value="C:cytosol"/>
    <property type="evidence" value="ECO:0007669"/>
    <property type="project" value="TreeGrafter"/>
</dbReference>
<dbReference type="GO" id="GO:0005743">
    <property type="term" value="C:mitochondrial inner membrane"/>
    <property type="evidence" value="ECO:0007669"/>
    <property type="project" value="UniProtKB-SubCell"/>
</dbReference>
<dbReference type="GO" id="GO:0005759">
    <property type="term" value="C:mitochondrial matrix"/>
    <property type="evidence" value="ECO:0007669"/>
    <property type="project" value="UniProtKB-SubCell"/>
</dbReference>
<dbReference type="GO" id="GO:0005524">
    <property type="term" value="F:ATP binding"/>
    <property type="evidence" value="ECO:0007669"/>
    <property type="project" value="UniProtKB-KW"/>
</dbReference>
<dbReference type="GO" id="GO:0046872">
    <property type="term" value="F:metal ion binding"/>
    <property type="evidence" value="ECO:0007669"/>
    <property type="project" value="UniProtKB-KW"/>
</dbReference>
<dbReference type="GO" id="GO:0004326">
    <property type="term" value="F:tetrahydrofolylpolyglutamate synthase activity"/>
    <property type="evidence" value="ECO:0007669"/>
    <property type="project" value="UniProtKB-EC"/>
</dbReference>
<dbReference type="GO" id="GO:0006730">
    <property type="term" value="P:one-carbon metabolic process"/>
    <property type="evidence" value="ECO:0007669"/>
    <property type="project" value="UniProtKB-KW"/>
</dbReference>
<dbReference type="FunFam" id="3.40.1190.10:FF:000009">
    <property type="entry name" value="Folylpolyglutamate synthase"/>
    <property type="match status" value="1"/>
</dbReference>
<dbReference type="FunFam" id="3.90.190.20:FF:000009">
    <property type="entry name" value="Folylpolyglutamate synthase"/>
    <property type="match status" value="1"/>
</dbReference>
<dbReference type="Gene3D" id="3.90.190.20">
    <property type="entry name" value="Mur ligase, C-terminal domain"/>
    <property type="match status" value="1"/>
</dbReference>
<dbReference type="Gene3D" id="3.40.1190.10">
    <property type="entry name" value="Mur-like, catalytic domain"/>
    <property type="match status" value="1"/>
</dbReference>
<dbReference type="InterPro" id="IPR001645">
    <property type="entry name" value="Folylpolyglutamate_synth"/>
</dbReference>
<dbReference type="InterPro" id="IPR018109">
    <property type="entry name" value="Folylpolyglutamate_synth_CS"/>
</dbReference>
<dbReference type="InterPro" id="IPR023600">
    <property type="entry name" value="Folylpolyglutamate_synth_euk"/>
</dbReference>
<dbReference type="InterPro" id="IPR036565">
    <property type="entry name" value="Mur-like_cat_sf"/>
</dbReference>
<dbReference type="InterPro" id="IPR036615">
    <property type="entry name" value="Mur_ligase_C_dom_sf"/>
</dbReference>
<dbReference type="NCBIfam" id="TIGR01499">
    <property type="entry name" value="folC"/>
    <property type="match status" value="1"/>
</dbReference>
<dbReference type="PANTHER" id="PTHR11136:SF5">
    <property type="entry name" value="FOLYLPOLYGLUTAMATE SYNTHASE, MITOCHONDRIAL"/>
    <property type="match status" value="1"/>
</dbReference>
<dbReference type="PANTHER" id="PTHR11136">
    <property type="entry name" value="FOLYLPOLYGLUTAMATE SYNTHASE-RELATED"/>
    <property type="match status" value="1"/>
</dbReference>
<dbReference type="PIRSF" id="PIRSF038895">
    <property type="entry name" value="FPGS"/>
    <property type="match status" value="1"/>
</dbReference>
<dbReference type="SUPFAM" id="SSF53623">
    <property type="entry name" value="MurD-like peptide ligases, catalytic domain"/>
    <property type="match status" value="1"/>
</dbReference>
<dbReference type="SUPFAM" id="SSF53244">
    <property type="entry name" value="MurD-like peptide ligases, peptide-binding domain"/>
    <property type="match status" value="1"/>
</dbReference>
<dbReference type="PROSITE" id="PS01011">
    <property type="entry name" value="FOLYLPOLYGLU_SYNT_1"/>
    <property type="match status" value="1"/>
</dbReference>
<dbReference type="PROSITE" id="PS01012">
    <property type="entry name" value="FOLYLPOLYGLU_SYNT_2"/>
    <property type="match status" value="1"/>
</dbReference>
<reference evidence="4" key="1">
    <citation type="journal article" date="2011" name="PLoS Genet.">
        <title>Whole-genome comparison reveals novel genetic elements that characterize the genome of industrial strains of Saccharomyces cerevisiae.</title>
        <authorList>
            <person name="Borneman A.R."/>
            <person name="Desany B.A."/>
            <person name="Riches D."/>
            <person name="Affourtit J.P."/>
            <person name="Forgan A.H."/>
            <person name="Pretorius I.S."/>
            <person name="Egholm M."/>
            <person name="Chambers P.J."/>
        </authorList>
    </citation>
    <scope>NUCLEOTIDE SEQUENCE [LARGE SCALE GENOMIC DNA]</scope>
    <source>
        <strain>Zymaflore VL3</strain>
    </source>
</reference>
<protein>
    <recommendedName>
        <fullName evidence="2">Folylpolyglutamate synthase</fullName>
        <ecNumber evidence="2">6.3.2.17</ecNumber>
    </recommendedName>
    <alternativeName>
        <fullName evidence="2">Folylpoly-gamma-glutamate synthetase</fullName>
        <shortName evidence="2">FPGS</shortName>
    </alternativeName>
    <alternativeName>
        <fullName evidence="2">Tetrahydrofolylpolyglutamate synthase</fullName>
        <shortName evidence="2">Tetrahydrofolate synthase</shortName>
    </alternativeName>
</protein>
<gene>
    <name evidence="2" type="primary">MET7</name>
    <name type="ORF">VL3_4585</name>
</gene>
<accession>E7QKX4</accession>